<protein>
    <recommendedName>
        <fullName>Gamma-secretase subunit pen-2</fullName>
    </recommendedName>
    <alternativeName>
        <fullName>Presenilin enhancer protein 2</fullName>
    </alternativeName>
</protein>
<name>PEN2_DROME</name>
<dbReference type="EMBL" id="AF512426">
    <property type="protein sequence ID" value="AAM88323.1"/>
    <property type="molecule type" value="mRNA"/>
</dbReference>
<dbReference type="EMBL" id="AE013599">
    <property type="protein sequence ID" value="AAO41356.2"/>
    <property type="molecule type" value="Genomic_DNA"/>
</dbReference>
<dbReference type="EMBL" id="BT030940">
    <property type="protein sequence ID" value="ABV82322.1"/>
    <property type="molecule type" value="mRNA"/>
</dbReference>
<dbReference type="EMBL" id="BT030980">
    <property type="protein sequence ID" value="ABV82362.1"/>
    <property type="molecule type" value="mRNA"/>
</dbReference>
<dbReference type="RefSeq" id="NP_001286566.1">
    <property type="nucleotide sequence ID" value="NM_001299637.1"/>
</dbReference>
<dbReference type="RefSeq" id="NP_788401.2">
    <property type="nucleotide sequence ID" value="NM_176221.4"/>
</dbReference>
<dbReference type="SMR" id="Q86BE9"/>
<dbReference type="BioGRID" id="75540">
    <property type="interactions" value="7"/>
</dbReference>
<dbReference type="ComplexPortal" id="CPX-2673">
    <property type="entry name" value="Gamma-secretase complex"/>
</dbReference>
<dbReference type="FunCoup" id="Q86BE9">
    <property type="interactions" value="609"/>
</dbReference>
<dbReference type="STRING" id="7227.FBpp0309291"/>
<dbReference type="PaxDb" id="7227-FBpp0088783"/>
<dbReference type="DNASU" id="251430"/>
<dbReference type="EnsemblMetazoa" id="FBtr0089842">
    <property type="protein sequence ID" value="FBpp0088783"/>
    <property type="gene ID" value="FBgn0053198"/>
</dbReference>
<dbReference type="EnsemblMetazoa" id="FBtr0340331">
    <property type="protein sequence ID" value="FBpp0309291"/>
    <property type="gene ID" value="FBgn0053198"/>
</dbReference>
<dbReference type="GeneID" id="251430"/>
<dbReference type="KEGG" id="dme:Dmel_CG33198"/>
<dbReference type="AGR" id="FB:FBgn0053198"/>
<dbReference type="CTD" id="251430"/>
<dbReference type="FlyBase" id="FBgn0053198">
    <property type="gene designation" value="pen-2"/>
</dbReference>
<dbReference type="VEuPathDB" id="VectorBase:FBgn0053198"/>
<dbReference type="eggNOG" id="KOG3402">
    <property type="taxonomic scope" value="Eukaryota"/>
</dbReference>
<dbReference type="GeneTree" id="ENSGT00390000016319"/>
<dbReference type="HOGENOM" id="CLU_124142_2_0_1"/>
<dbReference type="InParanoid" id="Q86BE9"/>
<dbReference type="OMA" id="KLYLCKW"/>
<dbReference type="OrthoDB" id="524898at2759"/>
<dbReference type="PhylomeDB" id="Q86BE9"/>
<dbReference type="Reactome" id="R-DME-1251985">
    <property type="pathway name" value="Nuclear signaling by ERBB4"/>
</dbReference>
<dbReference type="Reactome" id="R-DME-3928665">
    <property type="pathway name" value="EPH-ephrin mediated repulsion of cells"/>
</dbReference>
<dbReference type="SignaLink" id="Q86BE9"/>
<dbReference type="BioGRID-ORCS" id="251430">
    <property type="hits" value="0 hits in 1 CRISPR screen"/>
</dbReference>
<dbReference type="ChiTaRS" id="Pen">
    <property type="organism name" value="fly"/>
</dbReference>
<dbReference type="GenomeRNAi" id="251430"/>
<dbReference type="PRO" id="PR:Q86BE9"/>
<dbReference type="Proteomes" id="UP000000803">
    <property type="component" value="Chromosome 2R"/>
</dbReference>
<dbReference type="Bgee" id="FBgn0053198">
    <property type="expression patterns" value="Expressed in saliva-secreting gland and 81 other cell types or tissues"/>
</dbReference>
<dbReference type="ExpressionAtlas" id="Q86BE9">
    <property type="expression patterns" value="baseline and differential"/>
</dbReference>
<dbReference type="GO" id="GO:0070765">
    <property type="term" value="C:gamma-secretase complex"/>
    <property type="evidence" value="ECO:0000314"/>
    <property type="project" value="UniProtKB"/>
</dbReference>
<dbReference type="GO" id="GO:0005770">
    <property type="term" value="C:late endosome"/>
    <property type="evidence" value="ECO:0000314"/>
    <property type="project" value="FlyBase"/>
</dbReference>
<dbReference type="GO" id="GO:0055037">
    <property type="term" value="C:recycling endosome"/>
    <property type="evidence" value="ECO:0000314"/>
    <property type="project" value="FlyBase"/>
</dbReference>
<dbReference type="GO" id="GO:0034205">
    <property type="term" value="P:amyloid-beta formation"/>
    <property type="evidence" value="ECO:0000314"/>
    <property type="project" value="FlyBase"/>
</dbReference>
<dbReference type="GO" id="GO:0006509">
    <property type="term" value="P:membrane protein ectodomain proteolysis"/>
    <property type="evidence" value="ECO:0000314"/>
    <property type="project" value="FlyBase"/>
</dbReference>
<dbReference type="GO" id="GO:0007220">
    <property type="term" value="P:Notch receptor processing"/>
    <property type="evidence" value="ECO:0000318"/>
    <property type="project" value="GO_Central"/>
</dbReference>
<dbReference type="GO" id="GO:0035333">
    <property type="term" value="P:Notch receptor processing, ligand-dependent"/>
    <property type="evidence" value="ECO:0000316"/>
    <property type="project" value="FlyBase"/>
</dbReference>
<dbReference type="GO" id="GO:0007219">
    <property type="term" value="P:Notch signaling pathway"/>
    <property type="evidence" value="ECO:0000315"/>
    <property type="project" value="FlyBase"/>
</dbReference>
<dbReference type="GO" id="GO:0010950">
    <property type="term" value="P:positive regulation of endopeptidase activity"/>
    <property type="evidence" value="ECO:0000315"/>
    <property type="project" value="UniProtKB"/>
</dbReference>
<dbReference type="GO" id="GO:0016485">
    <property type="term" value="P:protein processing"/>
    <property type="evidence" value="ECO:0000316"/>
    <property type="project" value="UniProtKB"/>
</dbReference>
<dbReference type="InterPro" id="IPR019379">
    <property type="entry name" value="Gamma_Secretase_Asp_P_PEN2"/>
</dbReference>
<dbReference type="PANTHER" id="PTHR16318">
    <property type="entry name" value="GAMMA-SECRETASE SUBUNIT PEN-2"/>
    <property type="match status" value="1"/>
</dbReference>
<dbReference type="PANTHER" id="PTHR16318:SF0">
    <property type="entry name" value="GAMMA-SECRETASE SUBUNIT PEN-2"/>
    <property type="match status" value="1"/>
</dbReference>
<dbReference type="Pfam" id="PF10251">
    <property type="entry name" value="PEN-2"/>
    <property type="match status" value="1"/>
</dbReference>
<organism>
    <name type="scientific">Drosophila melanogaster</name>
    <name type="common">Fruit fly</name>
    <dbReference type="NCBI Taxonomy" id="7227"/>
    <lineage>
        <taxon>Eukaryota</taxon>
        <taxon>Metazoa</taxon>
        <taxon>Ecdysozoa</taxon>
        <taxon>Arthropoda</taxon>
        <taxon>Hexapoda</taxon>
        <taxon>Insecta</taxon>
        <taxon>Pterygota</taxon>
        <taxon>Neoptera</taxon>
        <taxon>Endopterygota</taxon>
        <taxon>Diptera</taxon>
        <taxon>Brachycera</taxon>
        <taxon>Muscomorpha</taxon>
        <taxon>Ephydroidea</taxon>
        <taxon>Drosophilidae</taxon>
        <taxon>Drosophila</taxon>
        <taxon>Sophophora</taxon>
    </lineage>
</organism>
<comment type="function">
    <text evidence="2 3">Essential subunit of the gamma-secretase complex, an endoprotease complex that catalyzes the intramembrane cleavage of integral membrane proteins such as Notch. It probably represents the last step of maturation of gamma-secretase, facilitating endoproteolysis of presenilin and conferring gamma-secretase activity.</text>
</comment>
<comment type="subunit">
    <text>Component of the gamma-secretase complex, a complex composed of a presenilin (Psn) homodimer, nicastrin (Nct), Aph-1 and Pen-2.</text>
</comment>
<comment type="subcellular location">
    <subcellularLocation>
        <location evidence="4">Membrane</location>
        <topology evidence="4">Multi-pass membrane protein</topology>
    </subcellularLocation>
</comment>
<comment type="similarity">
    <text evidence="4">Belongs to the PEN-2 family.</text>
</comment>
<feature type="chain" id="PRO_0000190904" description="Gamma-secretase subunit pen-2">
    <location>
        <begin position="1"/>
        <end position="101"/>
    </location>
</feature>
<feature type="topological domain" description="Lumenal" evidence="1">
    <location>
        <begin position="1"/>
        <end position="17"/>
    </location>
</feature>
<feature type="transmembrane region" description="Helical" evidence="1">
    <location>
        <begin position="18"/>
        <end position="38"/>
    </location>
</feature>
<feature type="topological domain" description="Cytoplasmic" evidence="1">
    <location>
        <begin position="39"/>
        <end position="57"/>
    </location>
</feature>
<feature type="transmembrane region" description="Helical" evidence="1">
    <location>
        <begin position="58"/>
        <end position="78"/>
    </location>
</feature>
<feature type="topological domain" description="Lumenal" evidence="1">
    <location>
        <begin position="79"/>
        <end position="101"/>
    </location>
</feature>
<feature type="sequence conflict" description="In Ref. 1; AAM88323." evidence="4" ref="1">
    <original>D</original>
    <variation>N</variation>
    <location>
        <position position="2"/>
    </location>
</feature>
<sequence>MDISKAPNPRKLELCRKYFFAGFAFLPFVWAINVCWFFTEAFHKPPFSEQSQIKRYVIYSAVGTLFWLIVLTAWIIIFQTNRTAWGATADYMSFIIPLGSA</sequence>
<evidence type="ECO:0000255" key="1"/>
<evidence type="ECO:0000269" key="2">
    <source>
    </source>
</evidence>
<evidence type="ECO:0000269" key="3">
    <source>
    </source>
</evidence>
<evidence type="ECO:0000305" key="4"/>
<gene>
    <name type="primary">pen-2</name>
    <name type="ORF">CG33198</name>
</gene>
<accession>Q86BE9</accession>
<accession>A8E6Z8</accession>
<accession>Q8MUT4</accession>
<reference key="1">
    <citation type="journal article" date="2002" name="Dev. Cell">
        <title>aph-1 and pen-2 are required for Notch pathway signaling, gamma-secretase cleavage of betaAPP, and presenilin protein accumulation.</title>
        <authorList>
            <person name="Francis R."/>
            <person name="McGrath G."/>
            <person name="Zhang J."/>
            <person name="Ruddy D.A."/>
            <person name="Sym M."/>
            <person name="Apfeld J."/>
            <person name="Nicoll M."/>
            <person name="Maxwell M."/>
            <person name="Hai B."/>
            <person name="Ellis M.C."/>
            <person name="Parks A.L."/>
            <person name="Xu W."/>
            <person name="Li J."/>
            <person name="Gurney M."/>
            <person name="Myers R.L."/>
            <person name="Himes C.S."/>
            <person name="Hiebsch R."/>
            <person name="Ruble C."/>
            <person name="Nye J.S."/>
            <person name="Curtis D."/>
        </authorList>
    </citation>
    <scope>NUCLEOTIDE SEQUENCE [MRNA]</scope>
    <scope>FUNCTION</scope>
</reference>
<reference key="2">
    <citation type="journal article" date="2000" name="Science">
        <title>The genome sequence of Drosophila melanogaster.</title>
        <authorList>
            <person name="Adams M.D."/>
            <person name="Celniker S.E."/>
            <person name="Holt R.A."/>
            <person name="Evans C.A."/>
            <person name="Gocayne J.D."/>
            <person name="Amanatides P.G."/>
            <person name="Scherer S.E."/>
            <person name="Li P.W."/>
            <person name="Hoskins R.A."/>
            <person name="Galle R.F."/>
            <person name="George R.A."/>
            <person name="Lewis S.E."/>
            <person name="Richards S."/>
            <person name="Ashburner M."/>
            <person name="Henderson S.N."/>
            <person name="Sutton G.G."/>
            <person name="Wortman J.R."/>
            <person name="Yandell M.D."/>
            <person name="Zhang Q."/>
            <person name="Chen L.X."/>
            <person name="Brandon R.C."/>
            <person name="Rogers Y.-H.C."/>
            <person name="Blazej R.G."/>
            <person name="Champe M."/>
            <person name="Pfeiffer B.D."/>
            <person name="Wan K.H."/>
            <person name="Doyle C."/>
            <person name="Baxter E.G."/>
            <person name="Helt G."/>
            <person name="Nelson C.R."/>
            <person name="Miklos G.L.G."/>
            <person name="Abril J.F."/>
            <person name="Agbayani A."/>
            <person name="An H.-J."/>
            <person name="Andrews-Pfannkoch C."/>
            <person name="Baldwin D."/>
            <person name="Ballew R.M."/>
            <person name="Basu A."/>
            <person name="Baxendale J."/>
            <person name="Bayraktaroglu L."/>
            <person name="Beasley E.M."/>
            <person name="Beeson K.Y."/>
            <person name="Benos P.V."/>
            <person name="Berman B.P."/>
            <person name="Bhandari D."/>
            <person name="Bolshakov S."/>
            <person name="Borkova D."/>
            <person name="Botchan M.R."/>
            <person name="Bouck J."/>
            <person name="Brokstein P."/>
            <person name="Brottier P."/>
            <person name="Burtis K.C."/>
            <person name="Busam D.A."/>
            <person name="Butler H."/>
            <person name="Cadieu E."/>
            <person name="Center A."/>
            <person name="Chandra I."/>
            <person name="Cherry J.M."/>
            <person name="Cawley S."/>
            <person name="Dahlke C."/>
            <person name="Davenport L.B."/>
            <person name="Davies P."/>
            <person name="de Pablos B."/>
            <person name="Delcher A."/>
            <person name="Deng Z."/>
            <person name="Mays A.D."/>
            <person name="Dew I."/>
            <person name="Dietz S.M."/>
            <person name="Dodson K."/>
            <person name="Doup L.E."/>
            <person name="Downes M."/>
            <person name="Dugan-Rocha S."/>
            <person name="Dunkov B.C."/>
            <person name="Dunn P."/>
            <person name="Durbin K.J."/>
            <person name="Evangelista C.C."/>
            <person name="Ferraz C."/>
            <person name="Ferriera S."/>
            <person name="Fleischmann W."/>
            <person name="Fosler C."/>
            <person name="Gabrielian A.E."/>
            <person name="Garg N.S."/>
            <person name="Gelbart W.M."/>
            <person name="Glasser K."/>
            <person name="Glodek A."/>
            <person name="Gong F."/>
            <person name="Gorrell J.H."/>
            <person name="Gu Z."/>
            <person name="Guan P."/>
            <person name="Harris M."/>
            <person name="Harris N.L."/>
            <person name="Harvey D.A."/>
            <person name="Heiman T.J."/>
            <person name="Hernandez J.R."/>
            <person name="Houck J."/>
            <person name="Hostin D."/>
            <person name="Houston K.A."/>
            <person name="Howland T.J."/>
            <person name="Wei M.-H."/>
            <person name="Ibegwam C."/>
            <person name="Jalali M."/>
            <person name="Kalush F."/>
            <person name="Karpen G.H."/>
            <person name="Ke Z."/>
            <person name="Kennison J.A."/>
            <person name="Ketchum K.A."/>
            <person name="Kimmel B.E."/>
            <person name="Kodira C.D."/>
            <person name="Kraft C.L."/>
            <person name="Kravitz S."/>
            <person name="Kulp D."/>
            <person name="Lai Z."/>
            <person name="Lasko P."/>
            <person name="Lei Y."/>
            <person name="Levitsky A.A."/>
            <person name="Li J.H."/>
            <person name="Li Z."/>
            <person name="Liang Y."/>
            <person name="Lin X."/>
            <person name="Liu X."/>
            <person name="Mattei B."/>
            <person name="McIntosh T.C."/>
            <person name="McLeod M.P."/>
            <person name="McPherson D."/>
            <person name="Merkulov G."/>
            <person name="Milshina N.V."/>
            <person name="Mobarry C."/>
            <person name="Morris J."/>
            <person name="Moshrefi A."/>
            <person name="Mount S.M."/>
            <person name="Moy M."/>
            <person name="Murphy B."/>
            <person name="Murphy L."/>
            <person name="Muzny D.M."/>
            <person name="Nelson D.L."/>
            <person name="Nelson D.R."/>
            <person name="Nelson K.A."/>
            <person name="Nixon K."/>
            <person name="Nusskern D.R."/>
            <person name="Pacleb J.M."/>
            <person name="Palazzolo M."/>
            <person name="Pittman G.S."/>
            <person name="Pan S."/>
            <person name="Pollard J."/>
            <person name="Puri V."/>
            <person name="Reese M.G."/>
            <person name="Reinert K."/>
            <person name="Remington K."/>
            <person name="Saunders R.D.C."/>
            <person name="Scheeler F."/>
            <person name="Shen H."/>
            <person name="Shue B.C."/>
            <person name="Siden-Kiamos I."/>
            <person name="Simpson M."/>
            <person name="Skupski M.P."/>
            <person name="Smith T.J."/>
            <person name="Spier E."/>
            <person name="Spradling A.C."/>
            <person name="Stapleton M."/>
            <person name="Strong R."/>
            <person name="Sun E."/>
            <person name="Svirskas R."/>
            <person name="Tector C."/>
            <person name="Turner R."/>
            <person name="Venter E."/>
            <person name="Wang A.H."/>
            <person name="Wang X."/>
            <person name="Wang Z.-Y."/>
            <person name="Wassarman D.A."/>
            <person name="Weinstock G.M."/>
            <person name="Weissenbach J."/>
            <person name="Williams S.M."/>
            <person name="Woodage T."/>
            <person name="Worley K.C."/>
            <person name="Wu D."/>
            <person name="Yang S."/>
            <person name="Yao Q.A."/>
            <person name="Ye J."/>
            <person name="Yeh R.-F."/>
            <person name="Zaveri J.S."/>
            <person name="Zhan M."/>
            <person name="Zhang G."/>
            <person name="Zhao Q."/>
            <person name="Zheng L."/>
            <person name="Zheng X.H."/>
            <person name="Zhong F.N."/>
            <person name="Zhong W."/>
            <person name="Zhou X."/>
            <person name="Zhu S.C."/>
            <person name="Zhu X."/>
            <person name="Smith H.O."/>
            <person name="Gibbs R.A."/>
            <person name="Myers E.W."/>
            <person name="Rubin G.M."/>
            <person name="Venter J.C."/>
        </authorList>
    </citation>
    <scope>NUCLEOTIDE SEQUENCE [LARGE SCALE GENOMIC DNA]</scope>
    <source>
        <strain>Berkeley</strain>
    </source>
</reference>
<reference key="3">
    <citation type="journal article" date="2002" name="Genome Biol.">
        <title>Annotation of the Drosophila melanogaster euchromatic genome: a systematic review.</title>
        <authorList>
            <person name="Misra S."/>
            <person name="Crosby M.A."/>
            <person name="Mungall C.J."/>
            <person name="Matthews B.B."/>
            <person name="Campbell K.S."/>
            <person name="Hradecky P."/>
            <person name="Huang Y."/>
            <person name="Kaminker J.S."/>
            <person name="Millburn G.H."/>
            <person name="Prochnik S.E."/>
            <person name="Smith C.D."/>
            <person name="Tupy J.L."/>
            <person name="Whitfield E.J."/>
            <person name="Bayraktaroglu L."/>
            <person name="Berman B.P."/>
            <person name="Bettencourt B.R."/>
            <person name="Celniker S.E."/>
            <person name="de Grey A.D.N.J."/>
            <person name="Drysdale R.A."/>
            <person name="Harris N.L."/>
            <person name="Richter J."/>
            <person name="Russo S."/>
            <person name="Schroeder A.J."/>
            <person name="Shu S.Q."/>
            <person name="Stapleton M."/>
            <person name="Yamada C."/>
            <person name="Ashburner M."/>
            <person name="Gelbart W.M."/>
            <person name="Rubin G.M."/>
            <person name="Lewis S.E."/>
        </authorList>
    </citation>
    <scope>GENOME REANNOTATION</scope>
    <source>
        <strain>Berkeley</strain>
    </source>
</reference>
<reference key="4">
    <citation type="submission" date="2007-10" db="EMBL/GenBank/DDBJ databases">
        <authorList>
            <person name="Stapleton M."/>
            <person name="Carlson J.W."/>
            <person name="Frise E."/>
            <person name="Kapadia B."/>
            <person name="Park S."/>
            <person name="Wan K.H."/>
            <person name="Yu C."/>
            <person name="Celniker S.E."/>
        </authorList>
    </citation>
    <scope>NUCLEOTIDE SEQUENCE [LARGE SCALE MRNA]</scope>
    <source>
        <strain>Berkeley</strain>
    </source>
</reference>
<reference key="5">
    <citation type="journal article" date="2003" name="Nature">
        <title>The role of presenilin cofactors in the gamma-secretase complex.</title>
        <authorList>
            <person name="Takasugi N."/>
            <person name="Tomita T."/>
            <person name="Hayashi I."/>
            <person name="Tsuruoka M."/>
            <person name="Niimura M."/>
            <person name="Takahashi Y."/>
            <person name="Thinakaran G."/>
            <person name="Iwatsubo T."/>
        </authorList>
    </citation>
    <scope>FUNCTION IN THE GAMMA-SECRETASE COMPLEX</scope>
    <scope>INTERACTION WITH APH-1; PSN AND NCT</scope>
</reference>
<keyword id="KW-0472">Membrane</keyword>
<keyword id="KW-0914">Notch signaling pathway</keyword>
<keyword id="KW-1185">Reference proteome</keyword>
<keyword id="KW-0812">Transmembrane</keyword>
<keyword id="KW-1133">Transmembrane helix</keyword>
<proteinExistence type="evidence at protein level"/>